<keyword id="KW-0012">Acyltransferase</keyword>
<keyword id="KW-0284">Flavonoid biosynthesis</keyword>
<keyword id="KW-0808">Transferase</keyword>
<name>CHS4_PEA</name>
<feature type="chain" id="PRO_0000216021" description="Chalcone synthase 4">
    <location>
        <begin position="1"/>
        <end position="389"/>
    </location>
</feature>
<feature type="active site" evidence="1">
    <location>
        <position position="164"/>
    </location>
</feature>
<accession>O23882</accession>
<proteinExistence type="inferred from homology"/>
<dbReference type="EC" id="2.3.1.74"/>
<dbReference type="EMBL" id="D88260">
    <property type="protein sequence ID" value="BAA22042.1"/>
    <property type="molecule type" value="Genomic_DNA"/>
</dbReference>
<dbReference type="SMR" id="O23882"/>
<dbReference type="OrthoDB" id="1854138at2759"/>
<dbReference type="UniPathway" id="UPA00154"/>
<dbReference type="GO" id="GO:0016210">
    <property type="term" value="F:naringenin-chalcone synthase activity"/>
    <property type="evidence" value="ECO:0007669"/>
    <property type="project" value="UniProtKB-EC"/>
</dbReference>
<dbReference type="GO" id="GO:0009813">
    <property type="term" value="P:flavonoid biosynthetic process"/>
    <property type="evidence" value="ECO:0007669"/>
    <property type="project" value="UniProtKB-UniPathway"/>
</dbReference>
<dbReference type="GO" id="GO:0030639">
    <property type="term" value="P:polyketide biosynthetic process"/>
    <property type="evidence" value="ECO:0007669"/>
    <property type="project" value="TreeGrafter"/>
</dbReference>
<dbReference type="CDD" id="cd00831">
    <property type="entry name" value="CHS_like"/>
    <property type="match status" value="1"/>
</dbReference>
<dbReference type="FunFam" id="3.40.47.10:FF:000014">
    <property type="entry name" value="Chalcone synthase 1"/>
    <property type="match status" value="1"/>
</dbReference>
<dbReference type="FunFam" id="3.40.47.10:FF:000025">
    <property type="entry name" value="Chalcone synthase 2"/>
    <property type="match status" value="1"/>
</dbReference>
<dbReference type="Gene3D" id="3.40.47.10">
    <property type="match status" value="2"/>
</dbReference>
<dbReference type="InterPro" id="IPR012328">
    <property type="entry name" value="Chalcone/stilbene_synt_C"/>
</dbReference>
<dbReference type="InterPro" id="IPR001099">
    <property type="entry name" value="Chalcone/stilbene_synt_N"/>
</dbReference>
<dbReference type="InterPro" id="IPR018088">
    <property type="entry name" value="Chalcone/stilbene_synthase_AS"/>
</dbReference>
<dbReference type="InterPro" id="IPR011141">
    <property type="entry name" value="Polyketide_synthase_type-III"/>
</dbReference>
<dbReference type="InterPro" id="IPR016039">
    <property type="entry name" value="Thiolase-like"/>
</dbReference>
<dbReference type="PANTHER" id="PTHR11877:SF62">
    <property type="entry name" value="CHALCONE SYNTHASE 7"/>
    <property type="match status" value="1"/>
</dbReference>
<dbReference type="PANTHER" id="PTHR11877">
    <property type="entry name" value="HYDROXYMETHYLGLUTARYL-COA SYNTHASE"/>
    <property type="match status" value="1"/>
</dbReference>
<dbReference type="Pfam" id="PF02797">
    <property type="entry name" value="Chal_sti_synt_C"/>
    <property type="match status" value="1"/>
</dbReference>
<dbReference type="Pfam" id="PF00195">
    <property type="entry name" value="Chal_sti_synt_N"/>
    <property type="match status" value="1"/>
</dbReference>
<dbReference type="PIRSF" id="PIRSF000451">
    <property type="entry name" value="PKS_III"/>
    <property type="match status" value="1"/>
</dbReference>
<dbReference type="SUPFAM" id="SSF53901">
    <property type="entry name" value="Thiolase-like"/>
    <property type="match status" value="2"/>
</dbReference>
<dbReference type="PROSITE" id="PS00441">
    <property type="entry name" value="CHALCONE_SYNTH"/>
    <property type="match status" value="1"/>
</dbReference>
<comment type="function">
    <text>The primary product of this enzyme is 4,2',4',6'-tetrahydroxychalcone (also termed naringenin-chalcone or chalcone) which can under specific conditions spontaneously isomerize into naringenin.</text>
</comment>
<comment type="catalytic activity">
    <reaction evidence="1">
        <text>(E)-4-coumaroyl-CoA + 3 malonyl-CoA + 3 H(+) = 2',4,4',6'-tetrahydroxychalcone + 3 CO2 + 4 CoA</text>
        <dbReference type="Rhea" id="RHEA:11128"/>
        <dbReference type="ChEBI" id="CHEBI:15378"/>
        <dbReference type="ChEBI" id="CHEBI:15413"/>
        <dbReference type="ChEBI" id="CHEBI:16526"/>
        <dbReference type="ChEBI" id="CHEBI:57287"/>
        <dbReference type="ChEBI" id="CHEBI:57384"/>
        <dbReference type="ChEBI" id="CHEBI:85008"/>
        <dbReference type="EC" id="2.3.1.74"/>
    </reaction>
</comment>
<comment type="pathway">
    <text>Secondary metabolite biosynthesis; flavonoid biosynthesis.</text>
</comment>
<comment type="similarity">
    <text evidence="2">Belongs to the thiolase-like superfamily. Chalcone/stilbene synthases family.</text>
</comment>
<evidence type="ECO:0000255" key="1">
    <source>
        <dbReference type="PROSITE-ProRule" id="PRU10023"/>
    </source>
</evidence>
<evidence type="ECO:0000305" key="2"/>
<organism>
    <name type="scientific">Pisum sativum</name>
    <name type="common">Garden pea</name>
    <name type="synonym">Lathyrus oleraceus</name>
    <dbReference type="NCBI Taxonomy" id="3888"/>
    <lineage>
        <taxon>Eukaryota</taxon>
        <taxon>Viridiplantae</taxon>
        <taxon>Streptophyta</taxon>
        <taxon>Embryophyta</taxon>
        <taxon>Tracheophyta</taxon>
        <taxon>Spermatophyta</taxon>
        <taxon>Magnoliopsida</taxon>
        <taxon>eudicotyledons</taxon>
        <taxon>Gunneridae</taxon>
        <taxon>Pentapetalae</taxon>
        <taxon>rosids</taxon>
        <taxon>fabids</taxon>
        <taxon>Fabales</taxon>
        <taxon>Fabaceae</taxon>
        <taxon>Papilionoideae</taxon>
        <taxon>50 kb inversion clade</taxon>
        <taxon>NPAAA clade</taxon>
        <taxon>Hologalegina</taxon>
        <taxon>IRL clade</taxon>
        <taxon>Fabeae</taxon>
        <taxon>Pisum</taxon>
    </lineage>
</organism>
<protein>
    <recommendedName>
        <fullName>Chalcone synthase 4</fullName>
        <ecNumber>2.3.1.74</ecNumber>
    </recommendedName>
    <alternativeName>
        <fullName>Naregenin-chalcone synthase 4</fullName>
    </alternativeName>
</protein>
<gene>
    <name type="primary">CHS4</name>
</gene>
<sequence length="389" mass="42857">MVSVSEIRKAQRAEGPATILAIGTANPANCVEQSTYPDFYFRITNSEHKIELKQKFQRMCDKSMINRRYMYLTEEILKENPSVCEYMAPSLDARQDMVVVEVPRLGKEAAVKAIKEWGQPKSKITHLIFCTTSGVDMPGADYQLTKLLGLRPYVKRYMMYQQGCFAGGTVLRLAKDLAENNKGARVLVVCSEVTAVTFRGPSDTHLDSLVGQALFGDGAAALIVGSDPLPEIEKPIFEMVWTAQTIAPDSEGAIDGHLREAGLTFHLLKDVPAIVSKNIDKALVEAFQPLGISDYNSIFWIAHPGGPAILDQVEQKLALKPEKMKATREVLSEYGNMSSACVLFILDEMRRKSIQNGLKTTGEGLEWGVLFGFGPGLTIETVVLHSVVI</sequence>
<reference key="1">
    <citation type="journal article" date="1997" name="Mol. Gen. Genet.">
        <title>Molecular evolution and functional relevance of the chalcone synthase genes of pea.</title>
        <authorList>
            <person name="Ito M."/>
            <person name="Ichinose Y."/>
            <person name="Kato H."/>
            <person name="Shiraishi T."/>
            <person name="Yamada T."/>
        </authorList>
    </citation>
    <scope>NUCLEOTIDE SEQUENCE [GENOMIC DNA]</scope>
    <source>
        <strain>cv. Midoriusui</strain>
    </source>
</reference>